<comment type="function">
    <text>Involved in oxygen transport from the lung to the various peripheral tissues.</text>
</comment>
<comment type="function">
    <molecule>Hemopressin</molecule>
    <text evidence="1">Hemopressin acts as an antagonist peptide of the cannabinoid receptor CNR1. Hemopressin-binding efficiently blocks cannabinoid receptor CNR1 and subsequent signaling.</text>
</comment>
<comment type="subunit">
    <text>Heterotetramer of two alpha chains and two beta chains.</text>
</comment>
<comment type="tissue specificity">
    <text>Red blood cells.</text>
</comment>
<comment type="similarity">
    <text evidence="2">Belongs to the globin family.</text>
</comment>
<evidence type="ECO:0000250" key="1">
    <source>
        <dbReference type="UniProtKB" id="P01946"/>
    </source>
</evidence>
<evidence type="ECO:0000255" key="2">
    <source>
        <dbReference type="PROSITE-ProRule" id="PRU00238"/>
    </source>
</evidence>
<dbReference type="EMBL" id="M94634">
    <property type="protein sequence ID" value="AAK13562.1"/>
    <property type="molecule type" value="Genomic_DNA"/>
</dbReference>
<dbReference type="SMR" id="Q9TS34"/>
<dbReference type="GO" id="GO:0072562">
    <property type="term" value="C:blood microparticle"/>
    <property type="evidence" value="ECO:0007669"/>
    <property type="project" value="TreeGrafter"/>
</dbReference>
<dbReference type="GO" id="GO:0031838">
    <property type="term" value="C:haptoglobin-hemoglobin complex"/>
    <property type="evidence" value="ECO:0007669"/>
    <property type="project" value="TreeGrafter"/>
</dbReference>
<dbReference type="GO" id="GO:0005833">
    <property type="term" value="C:hemoglobin complex"/>
    <property type="evidence" value="ECO:0007669"/>
    <property type="project" value="InterPro"/>
</dbReference>
<dbReference type="GO" id="GO:0031720">
    <property type="term" value="F:haptoglobin binding"/>
    <property type="evidence" value="ECO:0007669"/>
    <property type="project" value="TreeGrafter"/>
</dbReference>
<dbReference type="GO" id="GO:0020037">
    <property type="term" value="F:heme binding"/>
    <property type="evidence" value="ECO:0007669"/>
    <property type="project" value="InterPro"/>
</dbReference>
<dbReference type="GO" id="GO:0005506">
    <property type="term" value="F:iron ion binding"/>
    <property type="evidence" value="ECO:0007669"/>
    <property type="project" value="InterPro"/>
</dbReference>
<dbReference type="GO" id="GO:0043177">
    <property type="term" value="F:organic acid binding"/>
    <property type="evidence" value="ECO:0007669"/>
    <property type="project" value="TreeGrafter"/>
</dbReference>
<dbReference type="GO" id="GO:0019825">
    <property type="term" value="F:oxygen binding"/>
    <property type="evidence" value="ECO:0007669"/>
    <property type="project" value="InterPro"/>
</dbReference>
<dbReference type="GO" id="GO:0005344">
    <property type="term" value="F:oxygen carrier activity"/>
    <property type="evidence" value="ECO:0007669"/>
    <property type="project" value="UniProtKB-KW"/>
</dbReference>
<dbReference type="GO" id="GO:0004601">
    <property type="term" value="F:peroxidase activity"/>
    <property type="evidence" value="ECO:0007669"/>
    <property type="project" value="TreeGrafter"/>
</dbReference>
<dbReference type="GO" id="GO:0042744">
    <property type="term" value="P:hydrogen peroxide catabolic process"/>
    <property type="evidence" value="ECO:0007669"/>
    <property type="project" value="TreeGrafter"/>
</dbReference>
<dbReference type="CDD" id="cd08927">
    <property type="entry name" value="Hb-alpha-like"/>
    <property type="match status" value="1"/>
</dbReference>
<dbReference type="FunFam" id="1.10.490.10:FF:000002">
    <property type="entry name" value="Hemoglobin subunit alpha"/>
    <property type="match status" value="1"/>
</dbReference>
<dbReference type="Gene3D" id="1.10.490.10">
    <property type="entry name" value="Globins"/>
    <property type="match status" value="1"/>
</dbReference>
<dbReference type="InterPro" id="IPR000971">
    <property type="entry name" value="Globin"/>
</dbReference>
<dbReference type="InterPro" id="IPR009050">
    <property type="entry name" value="Globin-like_sf"/>
</dbReference>
<dbReference type="InterPro" id="IPR012292">
    <property type="entry name" value="Globin/Proto"/>
</dbReference>
<dbReference type="InterPro" id="IPR002338">
    <property type="entry name" value="Hemoglobin_a-typ"/>
</dbReference>
<dbReference type="InterPro" id="IPR050056">
    <property type="entry name" value="Hemoglobin_oxygen_transport"/>
</dbReference>
<dbReference type="InterPro" id="IPR002339">
    <property type="entry name" value="Hemoglobin_pi"/>
</dbReference>
<dbReference type="PANTHER" id="PTHR11442">
    <property type="entry name" value="HEMOGLOBIN FAMILY MEMBER"/>
    <property type="match status" value="1"/>
</dbReference>
<dbReference type="PANTHER" id="PTHR11442:SF48">
    <property type="entry name" value="HEMOGLOBIN SUBUNIT ALPHA"/>
    <property type="match status" value="1"/>
</dbReference>
<dbReference type="Pfam" id="PF00042">
    <property type="entry name" value="Globin"/>
    <property type="match status" value="1"/>
</dbReference>
<dbReference type="PRINTS" id="PR00612">
    <property type="entry name" value="ALPHAHAEM"/>
</dbReference>
<dbReference type="PRINTS" id="PR00815">
    <property type="entry name" value="PIHAEM"/>
</dbReference>
<dbReference type="SUPFAM" id="SSF46458">
    <property type="entry name" value="Globin-like"/>
    <property type="match status" value="1"/>
</dbReference>
<dbReference type="PROSITE" id="PS01033">
    <property type="entry name" value="GLOBIN"/>
    <property type="match status" value="1"/>
</dbReference>
<keyword id="KW-0349">Heme</keyword>
<keyword id="KW-0408">Iron</keyword>
<keyword id="KW-0479">Metal-binding</keyword>
<keyword id="KW-0561">Oxygen transport</keyword>
<keyword id="KW-0813">Transport</keyword>
<gene>
    <name type="primary">HBA2</name>
</gene>
<accession>Q9TS34</accession>
<protein>
    <recommendedName>
        <fullName>Hemoglobin subunit alpha-2</fullName>
    </recommendedName>
    <alternativeName>
        <fullName>Alpha-2-globin</fullName>
    </alternativeName>
    <alternativeName>
        <fullName>Hemoglobin alpha-2 chain</fullName>
    </alternativeName>
    <component>
        <recommendedName>
            <fullName evidence="1">Hemopressin</fullName>
        </recommendedName>
    </component>
</protein>
<organism>
    <name type="scientific">Hylobates lar</name>
    <name type="common">Lar gibbon</name>
    <name type="synonym">White-handed gibbon</name>
    <dbReference type="NCBI Taxonomy" id="9580"/>
    <lineage>
        <taxon>Eukaryota</taxon>
        <taxon>Metazoa</taxon>
        <taxon>Chordata</taxon>
        <taxon>Craniata</taxon>
        <taxon>Vertebrata</taxon>
        <taxon>Euteleostomi</taxon>
        <taxon>Mammalia</taxon>
        <taxon>Eutheria</taxon>
        <taxon>Euarchontoglires</taxon>
        <taxon>Primates</taxon>
        <taxon>Haplorrhini</taxon>
        <taxon>Catarrhini</taxon>
        <taxon>Hylobatidae</taxon>
        <taxon>Hylobates</taxon>
    </lineage>
</organism>
<reference key="1">
    <citation type="journal article" date="1992" name="J. Biol. Chem.">
        <title>Tandemly duplicated alpha globin genes of gibbon.</title>
        <authorList>
            <person name="Bailey A.D."/>
            <person name="Stanhope M."/>
            <person name="Slightom J.L."/>
            <person name="Goodman M."/>
            <person name="Shen C.C."/>
            <person name="Shen C.-K.J."/>
        </authorList>
    </citation>
    <scope>NUCLEOTIDE SEQUENCE [GENOMIC DNA]</scope>
    <source>
        <tissue>Blood</tissue>
    </source>
</reference>
<proteinExistence type="evidence at transcript level"/>
<name>HBA2_HYLLA</name>
<sequence length="142" mass="15327">MVLSPADKTNVKTAWGKVGAHAGDYGAEALERMFLSFPTTKTYFPHFDLSHGSAQVKGHGKKVADALTNAVAHVDDMPNAQTALSDLHAHKLRVDPVNFKLLSHCLLVTLAAHHPAEFTPAVHASLDKFLASVSTVLTSKYR</sequence>
<feature type="chain" id="PRO_0000052655" description="Hemoglobin subunit alpha-2">
    <location>
        <begin position="1"/>
        <end position="142"/>
    </location>
</feature>
<feature type="peptide" id="PRO_0000455884" description="Hemopressin" evidence="1">
    <location>
        <begin position="96"/>
        <end position="104"/>
    </location>
</feature>
<feature type="domain" description="Globin" evidence="2">
    <location>
        <begin position="2"/>
        <end position="142"/>
    </location>
</feature>
<feature type="binding site" evidence="2">
    <location>
        <position position="59"/>
    </location>
    <ligand>
        <name>O2</name>
        <dbReference type="ChEBI" id="CHEBI:15379"/>
    </ligand>
</feature>
<feature type="binding site" description="proximal binding residue" evidence="2">
    <location>
        <position position="88"/>
    </location>
    <ligand>
        <name>heme b</name>
        <dbReference type="ChEBI" id="CHEBI:60344"/>
    </ligand>
    <ligandPart>
        <name>Fe</name>
        <dbReference type="ChEBI" id="CHEBI:18248"/>
    </ligandPart>
</feature>